<reference key="1">
    <citation type="journal article" date="2005" name="Science">
        <title>The transcriptional landscape of the mammalian genome.</title>
        <authorList>
            <person name="Carninci P."/>
            <person name="Kasukawa T."/>
            <person name="Katayama S."/>
            <person name="Gough J."/>
            <person name="Frith M.C."/>
            <person name="Maeda N."/>
            <person name="Oyama R."/>
            <person name="Ravasi T."/>
            <person name="Lenhard B."/>
            <person name="Wells C."/>
            <person name="Kodzius R."/>
            <person name="Shimokawa K."/>
            <person name="Bajic V.B."/>
            <person name="Brenner S.E."/>
            <person name="Batalov S."/>
            <person name="Forrest A.R."/>
            <person name="Zavolan M."/>
            <person name="Davis M.J."/>
            <person name="Wilming L.G."/>
            <person name="Aidinis V."/>
            <person name="Allen J.E."/>
            <person name="Ambesi-Impiombato A."/>
            <person name="Apweiler R."/>
            <person name="Aturaliya R.N."/>
            <person name="Bailey T.L."/>
            <person name="Bansal M."/>
            <person name="Baxter L."/>
            <person name="Beisel K.W."/>
            <person name="Bersano T."/>
            <person name="Bono H."/>
            <person name="Chalk A.M."/>
            <person name="Chiu K.P."/>
            <person name="Choudhary V."/>
            <person name="Christoffels A."/>
            <person name="Clutterbuck D.R."/>
            <person name="Crowe M.L."/>
            <person name="Dalla E."/>
            <person name="Dalrymple B.P."/>
            <person name="de Bono B."/>
            <person name="Della Gatta G."/>
            <person name="di Bernardo D."/>
            <person name="Down T."/>
            <person name="Engstrom P."/>
            <person name="Fagiolini M."/>
            <person name="Faulkner G."/>
            <person name="Fletcher C.F."/>
            <person name="Fukushima T."/>
            <person name="Furuno M."/>
            <person name="Futaki S."/>
            <person name="Gariboldi M."/>
            <person name="Georgii-Hemming P."/>
            <person name="Gingeras T.R."/>
            <person name="Gojobori T."/>
            <person name="Green R.E."/>
            <person name="Gustincich S."/>
            <person name="Harbers M."/>
            <person name="Hayashi Y."/>
            <person name="Hensch T.K."/>
            <person name="Hirokawa N."/>
            <person name="Hill D."/>
            <person name="Huminiecki L."/>
            <person name="Iacono M."/>
            <person name="Ikeo K."/>
            <person name="Iwama A."/>
            <person name="Ishikawa T."/>
            <person name="Jakt M."/>
            <person name="Kanapin A."/>
            <person name="Katoh M."/>
            <person name="Kawasawa Y."/>
            <person name="Kelso J."/>
            <person name="Kitamura H."/>
            <person name="Kitano H."/>
            <person name="Kollias G."/>
            <person name="Krishnan S.P."/>
            <person name="Kruger A."/>
            <person name="Kummerfeld S.K."/>
            <person name="Kurochkin I.V."/>
            <person name="Lareau L.F."/>
            <person name="Lazarevic D."/>
            <person name="Lipovich L."/>
            <person name="Liu J."/>
            <person name="Liuni S."/>
            <person name="McWilliam S."/>
            <person name="Madan Babu M."/>
            <person name="Madera M."/>
            <person name="Marchionni L."/>
            <person name="Matsuda H."/>
            <person name="Matsuzawa S."/>
            <person name="Miki H."/>
            <person name="Mignone F."/>
            <person name="Miyake S."/>
            <person name="Morris K."/>
            <person name="Mottagui-Tabar S."/>
            <person name="Mulder N."/>
            <person name="Nakano N."/>
            <person name="Nakauchi H."/>
            <person name="Ng P."/>
            <person name="Nilsson R."/>
            <person name="Nishiguchi S."/>
            <person name="Nishikawa S."/>
            <person name="Nori F."/>
            <person name="Ohara O."/>
            <person name="Okazaki Y."/>
            <person name="Orlando V."/>
            <person name="Pang K.C."/>
            <person name="Pavan W.J."/>
            <person name="Pavesi G."/>
            <person name="Pesole G."/>
            <person name="Petrovsky N."/>
            <person name="Piazza S."/>
            <person name="Reed J."/>
            <person name="Reid J.F."/>
            <person name="Ring B.Z."/>
            <person name="Ringwald M."/>
            <person name="Rost B."/>
            <person name="Ruan Y."/>
            <person name="Salzberg S.L."/>
            <person name="Sandelin A."/>
            <person name="Schneider C."/>
            <person name="Schoenbach C."/>
            <person name="Sekiguchi K."/>
            <person name="Semple C.A."/>
            <person name="Seno S."/>
            <person name="Sessa L."/>
            <person name="Sheng Y."/>
            <person name="Shibata Y."/>
            <person name="Shimada H."/>
            <person name="Shimada K."/>
            <person name="Silva D."/>
            <person name="Sinclair B."/>
            <person name="Sperling S."/>
            <person name="Stupka E."/>
            <person name="Sugiura K."/>
            <person name="Sultana R."/>
            <person name="Takenaka Y."/>
            <person name="Taki K."/>
            <person name="Tammoja K."/>
            <person name="Tan S.L."/>
            <person name="Tang S."/>
            <person name="Taylor M.S."/>
            <person name="Tegner J."/>
            <person name="Teichmann S.A."/>
            <person name="Ueda H.R."/>
            <person name="van Nimwegen E."/>
            <person name="Verardo R."/>
            <person name="Wei C.L."/>
            <person name="Yagi K."/>
            <person name="Yamanishi H."/>
            <person name="Zabarovsky E."/>
            <person name="Zhu S."/>
            <person name="Zimmer A."/>
            <person name="Hide W."/>
            <person name="Bult C."/>
            <person name="Grimmond S.M."/>
            <person name="Teasdale R.D."/>
            <person name="Liu E.T."/>
            <person name="Brusic V."/>
            <person name="Quackenbush J."/>
            <person name="Wahlestedt C."/>
            <person name="Mattick J.S."/>
            <person name="Hume D.A."/>
            <person name="Kai C."/>
            <person name="Sasaki D."/>
            <person name="Tomaru Y."/>
            <person name="Fukuda S."/>
            <person name="Kanamori-Katayama M."/>
            <person name="Suzuki M."/>
            <person name="Aoki J."/>
            <person name="Arakawa T."/>
            <person name="Iida J."/>
            <person name="Imamura K."/>
            <person name="Itoh M."/>
            <person name="Kato T."/>
            <person name="Kawaji H."/>
            <person name="Kawagashira N."/>
            <person name="Kawashima T."/>
            <person name="Kojima M."/>
            <person name="Kondo S."/>
            <person name="Konno H."/>
            <person name="Nakano K."/>
            <person name="Ninomiya N."/>
            <person name="Nishio T."/>
            <person name="Okada M."/>
            <person name="Plessy C."/>
            <person name="Shibata K."/>
            <person name="Shiraki T."/>
            <person name="Suzuki S."/>
            <person name="Tagami M."/>
            <person name="Waki K."/>
            <person name="Watahiki A."/>
            <person name="Okamura-Oho Y."/>
            <person name="Suzuki H."/>
            <person name="Kawai J."/>
            <person name="Hayashizaki Y."/>
        </authorList>
    </citation>
    <scope>NUCLEOTIDE SEQUENCE [LARGE SCALE MRNA]</scope>
    <source>
        <strain>C57BL/6J</strain>
        <tissue>Cerebellum</tissue>
        <tissue>Hypothalamus</tissue>
        <tissue>Visual cortex</tissue>
    </source>
</reference>
<reference key="2">
    <citation type="journal article" date="2004" name="Genome Res.">
        <title>The status, quality, and expansion of the NIH full-length cDNA project: the Mammalian Gene Collection (MGC).</title>
        <authorList>
            <consortium name="The MGC Project Team"/>
        </authorList>
    </citation>
    <scope>NUCLEOTIDE SEQUENCE [LARGE SCALE MRNA]</scope>
    <source>
        <strain>C57BL/6J</strain>
        <tissue>Brain</tissue>
    </source>
</reference>
<comment type="function">
    <text evidence="1">Promotes LRP6 phosphorylation by casein kinases and thereby plays a role in Wnt signaling. May be a membrane scaffold protein involved in the self-aggregation of LRP6 to further enhance its activity (By similarity).</text>
</comment>
<comment type="subunit">
    <text evidence="1">Interacts with LRP6.</text>
</comment>
<comment type="subcellular location">
    <subcellularLocation>
        <location evidence="4">Membrane</location>
        <topology evidence="4">Multi-pass membrane protein</topology>
    </subcellularLocation>
    <subcellularLocation>
        <location evidence="1">Cell membrane</location>
    </subcellularLocation>
    <subcellularLocation>
        <location evidence="1">Cytoplasmic vesicle</location>
    </subcellularLocation>
    <text evidence="1">Largely located to vesicle-like structures.</text>
</comment>
<comment type="similarity">
    <text evidence="4">Belongs to the TMEM198 family.</text>
</comment>
<keyword id="KW-1003">Cell membrane</keyword>
<keyword id="KW-0968">Cytoplasmic vesicle</keyword>
<keyword id="KW-0217">Developmental protein</keyword>
<keyword id="KW-0472">Membrane</keyword>
<keyword id="KW-1185">Reference proteome</keyword>
<keyword id="KW-0812">Transmembrane</keyword>
<keyword id="KW-1133">Transmembrane helix</keyword>
<keyword id="KW-0879">Wnt signaling pathway</keyword>
<accession>Q8BG75</accession>
<feature type="chain" id="PRO_0000326031" description="Transmembrane protein 198">
    <location>
        <begin position="1"/>
        <end position="360"/>
    </location>
</feature>
<feature type="transmembrane region" description="Helical" evidence="2">
    <location>
        <begin position="36"/>
        <end position="56"/>
    </location>
</feature>
<feature type="transmembrane region" description="Helical" evidence="2">
    <location>
        <begin position="59"/>
        <end position="79"/>
    </location>
</feature>
<feature type="transmembrane region" description="Helical" evidence="2">
    <location>
        <begin position="93"/>
        <end position="113"/>
    </location>
</feature>
<feature type="transmembrane region" description="Helical" evidence="2">
    <location>
        <begin position="116"/>
        <end position="136"/>
    </location>
</feature>
<feature type="transmembrane region" description="Helical" evidence="2">
    <location>
        <begin position="145"/>
        <end position="165"/>
    </location>
</feature>
<feature type="transmembrane region" description="Helical" evidence="2">
    <location>
        <begin position="177"/>
        <end position="197"/>
    </location>
</feature>
<feature type="transmembrane region" description="Helical" evidence="2">
    <location>
        <begin position="218"/>
        <end position="238"/>
    </location>
</feature>
<feature type="region of interest" description="Disordered" evidence="3">
    <location>
        <begin position="260"/>
        <end position="302"/>
    </location>
</feature>
<feature type="region of interest" description="Disordered" evidence="3">
    <location>
        <begin position="316"/>
        <end position="360"/>
    </location>
</feature>
<feature type="compositionally biased region" description="Pro residues" evidence="3">
    <location>
        <begin position="279"/>
        <end position="296"/>
    </location>
</feature>
<feature type="compositionally biased region" description="Polar residues" evidence="3">
    <location>
        <begin position="326"/>
        <end position="339"/>
    </location>
</feature>
<evidence type="ECO:0000250" key="1"/>
<evidence type="ECO:0000255" key="2"/>
<evidence type="ECO:0000256" key="3">
    <source>
        <dbReference type="SAM" id="MobiDB-lite"/>
    </source>
</evidence>
<evidence type="ECO:0000305" key="4"/>
<name>TM198_MOUSE</name>
<dbReference type="EMBL" id="BC059868">
    <property type="protein sequence ID" value="AAH59868.1"/>
    <property type="molecule type" value="mRNA"/>
</dbReference>
<dbReference type="EMBL" id="AK038957">
    <property type="protein sequence ID" value="BAC30183.1"/>
    <property type="molecule type" value="mRNA"/>
</dbReference>
<dbReference type="EMBL" id="AK082334">
    <property type="protein sequence ID" value="BAC38470.1"/>
    <property type="molecule type" value="mRNA"/>
</dbReference>
<dbReference type="EMBL" id="AK158863">
    <property type="protein sequence ID" value="BAE34699.1"/>
    <property type="molecule type" value="mRNA"/>
</dbReference>
<dbReference type="CCDS" id="CCDS15076.1"/>
<dbReference type="RefSeq" id="NP_796030.1">
    <property type="nucleotide sequence ID" value="NM_177056.5"/>
</dbReference>
<dbReference type="FunCoup" id="Q8BG75">
    <property type="interactions" value="293"/>
</dbReference>
<dbReference type="STRING" id="10090.ENSMUSP00000057865"/>
<dbReference type="iPTMnet" id="Q8BG75"/>
<dbReference type="PhosphoSitePlus" id="Q8BG75"/>
<dbReference type="PaxDb" id="10090-ENSMUSP00000109205"/>
<dbReference type="PeptideAtlas" id="Q8BG75"/>
<dbReference type="ProteomicsDB" id="260684"/>
<dbReference type="Antibodypedia" id="56764">
    <property type="antibodies" value="11 antibodies from 5 providers"/>
</dbReference>
<dbReference type="Ensembl" id="ENSMUST00000050899.7">
    <property type="protein sequence ID" value="ENSMUSP00000057865.7"/>
    <property type="gene ID" value="ENSMUSG00000051703.15"/>
</dbReference>
<dbReference type="Ensembl" id="ENSMUST00000113575.9">
    <property type="protein sequence ID" value="ENSMUSP00000109205.3"/>
    <property type="gene ID" value="ENSMUSG00000051703.15"/>
</dbReference>
<dbReference type="GeneID" id="319998"/>
<dbReference type="KEGG" id="mmu:319998"/>
<dbReference type="UCSC" id="uc007bpl.2">
    <property type="organism name" value="mouse"/>
</dbReference>
<dbReference type="AGR" id="MGI:2443133"/>
<dbReference type="CTD" id="130612"/>
<dbReference type="MGI" id="MGI:2443133">
    <property type="gene designation" value="Tmem198"/>
</dbReference>
<dbReference type="VEuPathDB" id="HostDB:ENSMUSG00000051703"/>
<dbReference type="eggNOG" id="ENOG502QS1E">
    <property type="taxonomic scope" value="Eukaryota"/>
</dbReference>
<dbReference type="GeneTree" id="ENSGT00390000016940"/>
<dbReference type="HOGENOM" id="CLU_043600_0_0_1"/>
<dbReference type="InParanoid" id="Q8BG75"/>
<dbReference type="OMA" id="DYEYGSQ"/>
<dbReference type="OrthoDB" id="115781at2759"/>
<dbReference type="PhylomeDB" id="Q8BG75"/>
<dbReference type="TreeFam" id="TF323324"/>
<dbReference type="BioGRID-ORCS" id="319998">
    <property type="hits" value="2 hits in 80 CRISPR screens"/>
</dbReference>
<dbReference type="PRO" id="PR:Q8BG75"/>
<dbReference type="Proteomes" id="UP000000589">
    <property type="component" value="Chromosome 1"/>
</dbReference>
<dbReference type="RNAct" id="Q8BG75">
    <property type="molecule type" value="protein"/>
</dbReference>
<dbReference type="Bgee" id="ENSMUSG00000051703">
    <property type="expression patterns" value="Expressed in visual cortex and 144 other cell types or tissues"/>
</dbReference>
<dbReference type="ExpressionAtlas" id="Q8BG75">
    <property type="expression patterns" value="baseline and differential"/>
</dbReference>
<dbReference type="GO" id="GO:0031410">
    <property type="term" value="C:cytoplasmic vesicle"/>
    <property type="evidence" value="ECO:0007669"/>
    <property type="project" value="UniProtKB-KW"/>
</dbReference>
<dbReference type="GO" id="GO:0005886">
    <property type="term" value="C:plasma membrane"/>
    <property type="evidence" value="ECO:0007669"/>
    <property type="project" value="UniProtKB-SubCell"/>
</dbReference>
<dbReference type="GO" id="GO:0090263">
    <property type="term" value="P:positive regulation of canonical Wnt signaling pathway"/>
    <property type="evidence" value="ECO:0007669"/>
    <property type="project" value="Ensembl"/>
</dbReference>
<dbReference type="GO" id="GO:0016055">
    <property type="term" value="P:Wnt signaling pathway"/>
    <property type="evidence" value="ECO:0007669"/>
    <property type="project" value="UniProtKB-KW"/>
</dbReference>
<dbReference type="InterPro" id="IPR025256">
    <property type="entry name" value="TM7S3/TM198-like_dom"/>
</dbReference>
<dbReference type="InterPro" id="IPR040236">
    <property type="entry name" value="TMEM198"/>
</dbReference>
<dbReference type="PANTHER" id="PTHR31247:SF7">
    <property type="entry name" value="TRANSMEMBRANE PROTEIN 198"/>
    <property type="match status" value="1"/>
</dbReference>
<dbReference type="PANTHER" id="PTHR31247">
    <property type="entry name" value="TRANSMEMBRANE PROTEIN 198 FAMILY MEMBER"/>
    <property type="match status" value="1"/>
</dbReference>
<dbReference type="Pfam" id="PF13886">
    <property type="entry name" value="TM7S3_TM198"/>
    <property type="match status" value="1"/>
</dbReference>
<organism>
    <name type="scientific">Mus musculus</name>
    <name type="common">Mouse</name>
    <dbReference type="NCBI Taxonomy" id="10090"/>
    <lineage>
        <taxon>Eukaryota</taxon>
        <taxon>Metazoa</taxon>
        <taxon>Chordata</taxon>
        <taxon>Craniata</taxon>
        <taxon>Vertebrata</taxon>
        <taxon>Euteleostomi</taxon>
        <taxon>Mammalia</taxon>
        <taxon>Eutheria</taxon>
        <taxon>Euarchontoglires</taxon>
        <taxon>Glires</taxon>
        <taxon>Rodentia</taxon>
        <taxon>Myomorpha</taxon>
        <taxon>Muroidea</taxon>
        <taxon>Muridae</taxon>
        <taxon>Murinae</taxon>
        <taxon>Mus</taxon>
        <taxon>Mus</taxon>
    </lineage>
</organism>
<gene>
    <name type="primary">Tmem198</name>
</gene>
<proteinExistence type="evidence at transcript level"/>
<protein>
    <recommendedName>
        <fullName>Transmembrane protein 198</fullName>
    </recommendedName>
</protein>
<sequence length="360" mass="39752">MPGTMETLRFQLLPPEPDDTFWGAPCEQPLERRYQALPALVCIMCCLFGVVYCFFGYRCFKAVLFLTGLLFGSVVIFLLCYRERVLETQLSAGASAGIALGIGLLCGLVAMLVRSVGLFLVGLLLGLLLAAAALLGSAPYYQPGSVWGPLGLLLGGGLLCALLTLRWPRPLTTLATAVTGAALIATAADYFAELLLLGRYVVERLRAAPVPPLCWRSWALLALWPLLSLMGVLVQWRVTTERDSHTEVVISRQRRRVQLMRIRQQEERKEKRRKKRPPRAPPRGPRAPPRPGPPDPAYRRRPVPIKRFNGDVLSPSYIQSFRDRQTGSSLSSFMASPTDTDYEYGSRGPLTACSGPPVRV</sequence>